<evidence type="ECO:0000269" key="1">
    <source>
    </source>
</evidence>
<evidence type="ECO:0000303" key="2">
    <source>
    </source>
</evidence>
<evidence type="ECO:0000305" key="3"/>
<organism>
    <name type="scientific">Aspergillus calidoustus</name>
    <dbReference type="NCBI Taxonomy" id="454130"/>
    <lineage>
        <taxon>Eukaryota</taxon>
        <taxon>Fungi</taxon>
        <taxon>Dikarya</taxon>
        <taxon>Ascomycota</taxon>
        <taxon>Pezizomycotina</taxon>
        <taxon>Eurotiomycetes</taxon>
        <taxon>Eurotiomycetidae</taxon>
        <taxon>Eurotiales</taxon>
        <taxon>Aspergillaceae</taxon>
        <taxon>Aspergillus</taxon>
        <taxon>Aspergillus subgen. Nidulantes</taxon>
    </lineage>
</organism>
<sequence length="528" mass="58757">MVRALILDLGDVLFNWDAPASTPISRKTLGQMLHSEIWGEYERGHLTEDEAYNALAKRYSCEAKDVAHTFVLARESLRLDTKFKTFLQTLKQNANGSLRVYGMSNISKPDFEVLLGKADDWTLFDKIFPSGHVGMRKPDLAFFRYVLKDISTPVEDVVFVDDNLDNVTSARSLGMRSVLFHKKDEVQRQLTNIFGSPAERGLEYLSANKTNLQSATTTDIPIQDNFGQLLILEATEDPSLVRMEPGKRTWNFFIGSPSLTTDTFPDDLDTTSLALSIVPTSPDVVNSVIDEIISRRDKDGIVPTYFDNTRPRVDPIVCVNVLSMFAKYGREHDLPATVAWVRDVLYHRAYLGGTRYYGSAEAFLFFFTRFVRNLRPGTLKQDLHALLSERVRERLNTPVDALALSMRIQACHALGFDAPADIATLITMQDEDGGWPAAVIYKYGAGGLGITNRGVSTAFAVKAITGSPVKTETNIGGDGARAVSAMSSLEARRLQPISSVGDWVRFIIASLHVHLAWLWNVLLLSKVV</sequence>
<dbReference type="EC" id="4.2.3.194" evidence="1"/>
<dbReference type="EMBL" id="CDMC01000002">
    <property type="protein sequence ID" value="CEN60542.1"/>
    <property type="molecule type" value="Genomic_DNA"/>
</dbReference>
<dbReference type="SMR" id="A0A0U5GNT1"/>
<dbReference type="STRING" id="454130.A0A0U5GNT1"/>
<dbReference type="OMA" id="FYHYNRG"/>
<dbReference type="OrthoDB" id="2012566at2759"/>
<dbReference type="UniPathway" id="UPA00213"/>
<dbReference type="Proteomes" id="UP000054771">
    <property type="component" value="Unassembled WGS sequence"/>
</dbReference>
<dbReference type="GO" id="GO:0016829">
    <property type="term" value="F:lyase activity"/>
    <property type="evidence" value="ECO:0007669"/>
    <property type="project" value="UniProtKB-KW"/>
</dbReference>
<dbReference type="GO" id="GO:0016791">
    <property type="term" value="F:phosphatase activity"/>
    <property type="evidence" value="ECO:0007669"/>
    <property type="project" value="UniProtKB-ARBA"/>
</dbReference>
<dbReference type="GO" id="GO:0016114">
    <property type="term" value="P:terpenoid biosynthetic process"/>
    <property type="evidence" value="ECO:0007669"/>
    <property type="project" value="UniProtKB-UniPathway"/>
</dbReference>
<dbReference type="CDD" id="cd02603">
    <property type="entry name" value="HAD_sEH-N_like"/>
    <property type="match status" value="1"/>
</dbReference>
<dbReference type="Gene3D" id="3.40.50.1000">
    <property type="entry name" value="HAD superfamily/HAD-like"/>
    <property type="match status" value="1"/>
</dbReference>
<dbReference type="InterPro" id="IPR036412">
    <property type="entry name" value="HAD-like_sf"/>
</dbReference>
<dbReference type="InterPro" id="IPR006439">
    <property type="entry name" value="HAD-SF_hydro_IA"/>
</dbReference>
<dbReference type="InterPro" id="IPR041492">
    <property type="entry name" value="HAD_2"/>
</dbReference>
<dbReference type="InterPro" id="IPR023214">
    <property type="entry name" value="HAD_sf"/>
</dbReference>
<dbReference type="NCBIfam" id="TIGR01509">
    <property type="entry name" value="HAD-SF-IA-v3"/>
    <property type="match status" value="1"/>
</dbReference>
<dbReference type="PANTHER" id="PTHR43611">
    <property type="entry name" value="ALPHA-D-GLUCOSE 1-PHOSPHATE PHOSPHATASE"/>
    <property type="match status" value="1"/>
</dbReference>
<dbReference type="PANTHER" id="PTHR43611:SF3">
    <property type="entry name" value="FLAVIN MONONUCLEOTIDE HYDROLASE 1, CHLOROPLATIC"/>
    <property type="match status" value="1"/>
</dbReference>
<dbReference type="Pfam" id="PF13419">
    <property type="entry name" value="HAD_2"/>
    <property type="match status" value="1"/>
</dbReference>
<dbReference type="PRINTS" id="PR00413">
    <property type="entry name" value="HADHALOGNASE"/>
</dbReference>
<dbReference type="SFLD" id="SFLDG01129">
    <property type="entry name" value="C1.5:_HAD__Beta-PGM__Phosphata"/>
    <property type="match status" value="1"/>
</dbReference>
<dbReference type="SFLD" id="SFLDS00003">
    <property type="entry name" value="Haloacid_Dehalogenase"/>
    <property type="match status" value="1"/>
</dbReference>
<dbReference type="SUPFAM" id="SSF56784">
    <property type="entry name" value="HAD-like"/>
    <property type="match status" value="1"/>
</dbReference>
<reference key="1">
    <citation type="journal article" date="2016" name="Genome Announc.">
        <title>Draft genome sequences of fungus Aspergillus calidoustus.</title>
        <authorList>
            <person name="Horn F."/>
            <person name="Linde J."/>
            <person name="Mattern D.J."/>
            <person name="Walther G."/>
            <person name="Guthke R."/>
            <person name="Scherlach K."/>
            <person name="Martin K."/>
            <person name="Brakhage A.A."/>
            <person name="Petzke L."/>
            <person name="Valiante V."/>
        </authorList>
    </citation>
    <scope>NUCLEOTIDE SEQUENCE [LARGE SCALE GENOMIC DNA]</scope>
    <source>
        <strain>SF006504</strain>
    </source>
</reference>
<reference key="2">
    <citation type="journal article" date="2021" name="Angew. Chem. Int. Ed.">
        <title>Biosynthesis of fungal drimane-type sesquiterpene esters.</title>
        <authorList>
            <person name="Huang Y."/>
            <person name="Hoefgen S."/>
            <person name="Valiante V."/>
        </authorList>
    </citation>
    <scope>FUNCTION</scope>
    <scope>DISRUPTION PHENOTYPE</scope>
    <scope>CATALYTIC ACTIVITY</scope>
    <scope>PATHWAY</scope>
</reference>
<comment type="function">
    <text evidence="1">Drimenol cyclase; part of the gene cluster that mediates the biosynthesis of various drimane-type sesquiterpene esters, compounds that exhibit diverse biological activities and are widely present in eukaryotes (PubMed:34468074). The pathway begins with the synthesis of the backbone drimenol by the terpene cyclase drtB using farnesyl pyrophosphate (FPP) as substrate (PubMed:34468074). The cytochrome P450 monooxygenase drtD is then responsible for the hydroxylations at C-6, C-9 and C-12, as well as the oxidation of hydroxyl groups at C-6 and C-11 to a ketone and an aldehyde, respectively (PubMed:34468074). Then, the biosynthesis can go in two directions, either the hydroxylated drimenol is further hydroxylated at C-2 and C-3 by an enzyme(s) not associated with the drt cluster, or the FAD-binding oxidoreductase drtC further oxidizes C-11 or C-12 to form the butyrolactone ring (PubMed:34468074). DrtB, drtD and drtC are solely responsible for the formation of the different drimane structures observed during drimane sesquiterpenes biosynthesis (PubMed:34468074). The polyketide synthase drtA synthesizes different lengths (C6 and C8) of PKS chains, which are then oxidized to varying degrees by the short-chain dehydrogenase drtF (PubMed:34468074). Finally, these PKS chains are transferred onto drimane sesquiterpenes by the acyltransferase drtE, forming the sesquiterpene esters (PubMed:34468074). In addition to the different fatty acyl-CoA chains produced by drtA, drtE is also able to use cinnamoyl-CoA as a substrate (PubMed:34468074).</text>
</comment>
<comment type="catalytic activity">
    <reaction evidence="1">
        <text>(2E,6E)-farnesyl diphosphate + H2O = (5S,9S,10S)-drim-7-en-11-ol + diphosphate</text>
        <dbReference type="Rhea" id="RHEA:28290"/>
        <dbReference type="ChEBI" id="CHEBI:15377"/>
        <dbReference type="ChEBI" id="CHEBI:33019"/>
        <dbReference type="ChEBI" id="CHEBI:61148"/>
        <dbReference type="ChEBI" id="CHEBI:175763"/>
        <dbReference type="EC" id="4.2.3.194"/>
    </reaction>
    <physiologicalReaction direction="left-to-right" evidence="1">
        <dbReference type="Rhea" id="RHEA:28291"/>
    </physiologicalReaction>
</comment>
<comment type="pathway">
    <text evidence="1">Secondary metabolite biosynthesis; terpenoid biosynthesis.</text>
</comment>
<comment type="disruption phenotype">
    <text evidence="1">Abolished the drimane sesquiterpenes biosynthesis.</text>
</comment>
<comment type="miscellaneous">
    <text evidence="1">The various drimane-type sesquiterpene esters produced by the A.calidoustus drt cluster include asperiene C, asperiene A, (6-Strobilactone-B) ester of (E,E)-6-carbonyl-7-hydroxy-2,4-octadienoic acid, ustusolate A, ustusolate C, ustusolide E, ustusoic acid A, (2'E,4'E)-6-(1'-carboxyhexa-2',4',-diene)-9-hydroxy-drim-7-ene-11,12-olide, RES-1149-2, as well as the 3 newly identified compounds calidoustene A, calidoustene B and calidoustene C.</text>
</comment>
<comment type="similarity">
    <text evidence="3">Belongs to the HAD-like hydrolase superfamily.</text>
</comment>
<keyword id="KW-0456">Lyase</keyword>
<keyword id="KW-1185">Reference proteome</keyword>
<proteinExistence type="evidence at protein level"/>
<accession>A0A0U5GNT1</accession>
<feature type="chain" id="PRO_0000454532" description="Drimenol cyclase drtB">
    <location>
        <begin position="1"/>
        <end position="528"/>
    </location>
</feature>
<gene>
    <name evidence="2" type="primary">drtB</name>
    <name type="ORF">ASPCAL02978</name>
</gene>
<protein>
    <recommendedName>
        <fullName evidence="2">Drimenol cyclase drtB</fullName>
        <ecNumber evidence="1">4.2.3.194</ecNumber>
    </recommendedName>
    <alternativeName>
        <fullName evidence="2">Drimane-type sesquiterpene ester biosynthesis cluster protein B</fullName>
    </alternativeName>
    <alternativeName>
        <fullName evidence="3">Drimenol synthase</fullName>
    </alternativeName>
</protein>
<name>DRTB_ASPCI</name>